<proteinExistence type="inferred from homology"/>
<accession>Q2IJ58</accession>
<sequence length="162" mass="18140">MKHRVVGRRLDRTTEHRTAMFKNMVTSLFRHERIVTTTPKAKELKRFADKVITQAKRGTPHARRLAHRNVRDVEVLNKLFDTLAERFKARPGGYTRIVRVGRRAGDNAEMSVIELVDRAPAAAPEAEEKGEKKAAGKAEKAPKAAKAPKAEKKPAKKAAKAE</sequence>
<feature type="chain" id="PRO_0000267819" description="Large ribosomal subunit protein bL17">
    <location>
        <begin position="1"/>
        <end position="162"/>
    </location>
</feature>
<feature type="region of interest" description="Disordered" evidence="2">
    <location>
        <begin position="118"/>
        <end position="162"/>
    </location>
</feature>
<feature type="compositionally biased region" description="Basic and acidic residues" evidence="2">
    <location>
        <begin position="126"/>
        <end position="162"/>
    </location>
</feature>
<gene>
    <name evidence="1" type="primary">rplQ</name>
    <name type="ordered locus">Adeh_1918</name>
</gene>
<protein>
    <recommendedName>
        <fullName evidence="1">Large ribosomal subunit protein bL17</fullName>
    </recommendedName>
    <alternativeName>
        <fullName evidence="3">50S ribosomal protein L17</fullName>
    </alternativeName>
</protein>
<evidence type="ECO:0000255" key="1">
    <source>
        <dbReference type="HAMAP-Rule" id="MF_01368"/>
    </source>
</evidence>
<evidence type="ECO:0000256" key="2">
    <source>
        <dbReference type="SAM" id="MobiDB-lite"/>
    </source>
</evidence>
<evidence type="ECO:0000305" key="3"/>
<keyword id="KW-1185">Reference proteome</keyword>
<keyword id="KW-0687">Ribonucleoprotein</keyword>
<keyword id="KW-0689">Ribosomal protein</keyword>
<dbReference type="EMBL" id="CP000251">
    <property type="protein sequence ID" value="ABC81689.1"/>
    <property type="molecule type" value="Genomic_DNA"/>
</dbReference>
<dbReference type="RefSeq" id="WP_011420972.1">
    <property type="nucleotide sequence ID" value="NC_007760.1"/>
</dbReference>
<dbReference type="SMR" id="Q2IJ58"/>
<dbReference type="STRING" id="290397.Adeh_1918"/>
<dbReference type="KEGG" id="ade:Adeh_1918"/>
<dbReference type="eggNOG" id="COG0203">
    <property type="taxonomic scope" value="Bacteria"/>
</dbReference>
<dbReference type="HOGENOM" id="CLU_074407_0_1_7"/>
<dbReference type="OrthoDB" id="9809073at2"/>
<dbReference type="Proteomes" id="UP000001935">
    <property type="component" value="Chromosome"/>
</dbReference>
<dbReference type="GO" id="GO:0022625">
    <property type="term" value="C:cytosolic large ribosomal subunit"/>
    <property type="evidence" value="ECO:0007669"/>
    <property type="project" value="TreeGrafter"/>
</dbReference>
<dbReference type="GO" id="GO:0003735">
    <property type="term" value="F:structural constituent of ribosome"/>
    <property type="evidence" value="ECO:0007669"/>
    <property type="project" value="InterPro"/>
</dbReference>
<dbReference type="GO" id="GO:0006412">
    <property type="term" value="P:translation"/>
    <property type="evidence" value="ECO:0007669"/>
    <property type="project" value="UniProtKB-UniRule"/>
</dbReference>
<dbReference type="FunFam" id="3.90.1030.10:FF:000001">
    <property type="entry name" value="50S ribosomal protein L17"/>
    <property type="match status" value="1"/>
</dbReference>
<dbReference type="Gene3D" id="3.90.1030.10">
    <property type="entry name" value="Ribosomal protein L17"/>
    <property type="match status" value="1"/>
</dbReference>
<dbReference type="HAMAP" id="MF_01368">
    <property type="entry name" value="Ribosomal_bL17"/>
    <property type="match status" value="1"/>
</dbReference>
<dbReference type="InterPro" id="IPR000456">
    <property type="entry name" value="Ribosomal_bL17"/>
</dbReference>
<dbReference type="InterPro" id="IPR047859">
    <property type="entry name" value="Ribosomal_bL17_CS"/>
</dbReference>
<dbReference type="InterPro" id="IPR036373">
    <property type="entry name" value="Ribosomal_bL17_sf"/>
</dbReference>
<dbReference type="NCBIfam" id="TIGR00059">
    <property type="entry name" value="L17"/>
    <property type="match status" value="1"/>
</dbReference>
<dbReference type="PANTHER" id="PTHR14413:SF16">
    <property type="entry name" value="LARGE RIBOSOMAL SUBUNIT PROTEIN BL17M"/>
    <property type="match status" value="1"/>
</dbReference>
<dbReference type="PANTHER" id="PTHR14413">
    <property type="entry name" value="RIBOSOMAL PROTEIN L17"/>
    <property type="match status" value="1"/>
</dbReference>
<dbReference type="Pfam" id="PF01196">
    <property type="entry name" value="Ribosomal_L17"/>
    <property type="match status" value="1"/>
</dbReference>
<dbReference type="SUPFAM" id="SSF64263">
    <property type="entry name" value="Prokaryotic ribosomal protein L17"/>
    <property type="match status" value="1"/>
</dbReference>
<dbReference type="PROSITE" id="PS01167">
    <property type="entry name" value="RIBOSOMAL_L17"/>
    <property type="match status" value="1"/>
</dbReference>
<reference key="1">
    <citation type="submission" date="2006-01" db="EMBL/GenBank/DDBJ databases">
        <title>Complete sequence of Anaeromyxobacter dehalogenans 2CP-C.</title>
        <authorList>
            <person name="Copeland A."/>
            <person name="Lucas S."/>
            <person name="Lapidus A."/>
            <person name="Barry K."/>
            <person name="Detter J.C."/>
            <person name="Glavina T."/>
            <person name="Hammon N."/>
            <person name="Israni S."/>
            <person name="Pitluck S."/>
            <person name="Brettin T."/>
            <person name="Bruce D."/>
            <person name="Han C."/>
            <person name="Tapia R."/>
            <person name="Gilna P."/>
            <person name="Kiss H."/>
            <person name="Schmutz J."/>
            <person name="Larimer F."/>
            <person name="Land M."/>
            <person name="Kyrpides N."/>
            <person name="Anderson I."/>
            <person name="Sanford R.A."/>
            <person name="Ritalahti K.M."/>
            <person name="Thomas H.S."/>
            <person name="Kirby J.R."/>
            <person name="Zhulin I.B."/>
            <person name="Loeffler F.E."/>
            <person name="Richardson P."/>
        </authorList>
    </citation>
    <scope>NUCLEOTIDE SEQUENCE [LARGE SCALE GENOMIC DNA]</scope>
    <source>
        <strain>2CP-C</strain>
    </source>
</reference>
<name>RL17_ANADE</name>
<organism>
    <name type="scientific">Anaeromyxobacter dehalogenans (strain 2CP-C)</name>
    <dbReference type="NCBI Taxonomy" id="290397"/>
    <lineage>
        <taxon>Bacteria</taxon>
        <taxon>Pseudomonadati</taxon>
        <taxon>Myxococcota</taxon>
        <taxon>Myxococcia</taxon>
        <taxon>Myxococcales</taxon>
        <taxon>Cystobacterineae</taxon>
        <taxon>Anaeromyxobacteraceae</taxon>
        <taxon>Anaeromyxobacter</taxon>
    </lineage>
</organism>
<comment type="subunit">
    <text evidence="1">Part of the 50S ribosomal subunit. Contacts protein L32.</text>
</comment>
<comment type="similarity">
    <text evidence="1">Belongs to the bacterial ribosomal protein bL17 family.</text>
</comment>